<comment type="function">
    <text evidence="2">Catalyzes the condensation of the acetyl group of acetyl coenzyme A (acetyl-CoA) with oxaloacetate to form citrate. This enzyme is highly Re-face stereospecific with respect to the C-2 of oxaloacetate.</text>
</comment>
<comment type="catalytic activity">
    <reaction evidence="2">
        <text>oxaloacetate + acetyl-CoA + H2O = citrate + CoA + H(+)</text>
        <dbReference type="Rhea" id="RHEA:16845"/>
        <dbReference type="ChEBI" id="CHEBI:15377"/>
        <dbReference type="ChEBI" id="CHEBI:15378"/>
        <dbReference type="ChEBI" id="CHEBI:16452"/>
        <dbReference type="ChEBI" id="CHEBI:16947"/>
        <dbReference type="ChEBI" id="CHEBI:57287"/>
        <dbReference type="ChEBI" id="CHEBI:57288"/>
        <dbReference type="EC" id="2.3.3.3"/>
    </reaction>
</comment>
<comment type="cofactor">
    <cofactor evidence="2">
        <name>Mn(2+)</name>
        <dbReference type="ChEBI" id="CHEBI:29035"/>
    </cofactor>
</comment>
<comment type="activity regulation">
    <text evidence="2">Inhibited by citrate and under aerobic conditions.</text>
</comment>
<comment type="biophysicochemical properties">
    <kinetics>
        <KM evidence="2">50 uM for oxaloacetate</KM>
        <KM evidence="2">75 uM for acetyl-CoA</KM>
        <Vmax evidence="2">9.1 umol/sec/mg enzyme toward acetyl-CoA</Vmax>
        <Vmax evidence="2">11.2 umol/sec/mg enzyme toward oxaloacetate</Vmax>
    </kinetics>
</comment>
<comment type="similarity">
    <text evidence="4">Belongs to the alpha-IPM synthase/homocitrate synthase family.</text>
</comment>
<organism>
    <name type="scientific">Dehalococcoides mccartyi (strain CBDB1)</name>
    <dbReference type="NCBI Taxonomy" id="255470"/>
    <lineage>
        <taxon>Bacteria</taxon>
        <taxon>Bacillati</taxon>
        <taxon>Chloroflexota</taxon>
        <taxon>Dehalococcoidia</taxon>
        <taxon>Dehalococcoidales</taxon>
        <taxon>Dehalococcoidaceae</taxon>
        <taxon>Dehalococcoides</taxon>
    </lineage>
</organism>
<evidence type="ECO:0000255" key="1">
    <source>
        <dbReference type="PROSITE-ProRule" id="PRU01151"/>
    </source>
</evidence>
<evidence type="ECO:0000269" key="2">
    <source>
    </source>
</evidence>
<evidence type="ECO:0000303" key="3">
    <source>
    </source>
</evidence>
<evidence type="ECO:0000305" key="4"/>
<feature type="chain" id="PRO_0000436431" description="Citrate (Re)-synthase">
    <location>
        <begin position="1"/>
        <end position="415"/>
    </location>
</feature>
<feature type="domain" description="Pyruvate carboxyltransferase" evidence="1">
    <location>
        <begin position="4"/>
        <end position="275"/>
    </location>
</feature>
<gene>
    <name type="ordered locus">cbdbA1708</name>
</gene>
<dbReference type="EC" id="2.3.3.3" evidence="2"/>
<dbReference type="EMBL" id="AJ965256">
    <property type="protein sequence ID" value="CAI83711.1"/>
    <property type="molecule type" value="Genomic_DNA"/>
</dbReference>
<dbReference type="RefSeq" id="WP_011310049.1">
    <property type="nucleotide sequence ID" value="NC_007356.1"/>
</dbReference>
<dbReference type="SMR" id="P0DO96"/>
<dbReference type="KEGG" id="deh:cbdbA1708"/>
<dbReference type="HOGENOM" id="CLU_022158_4_2_0"/>
<dbReference type="BRENDA" id="2.3.3.3">
    <property type="organism ID" value="12662"/>
</dbReference>
<dbReference type="SABIO-RK" id="P0DO96"/>
<dbReference type="Proteomes" id="UP000000433">
    <property type="component" value="Chromosome"/>
</dbReference>
<dbReference type="GO" id="GO:0050450">
    <property type="term" value="F:citrate (Re)-synthase activity"/>
    <property type="evidence" value="ECO:0007669"/>
    <property type="project" value="UniProtKB-EC"/>
</dbReference>
<dbReference type="FunFam" id="3.20.20.70:FF:000431">
    <property type="entry name" value="Homocitrate synthase"/>
    <property type="match status" value="1"/>
</dbReference>
<dbReference type="Gene3D" id="1.10.238.260">
    <property type="match status" value="1"/>
</dbReference>
<dbReference type="Gene3D" id="3.20.20.70">
    <property type="entry name" value="Aldolase class I"/>
    <property type="match status" value="1"/>
</dbReference>
<dbReference type="InterPro" id="IPR013785">
    <property type="entry name" value="Aldolase_TIM"/>
</dbReference>
<dbReference type="InterPro" id="IPR054691">
    <property type="entry name" value="LeuA/HCS_post-cat"/>
</dbReference>
<dbReference type="InterPro" id="IPR000891">
    <property type="entry name" value="PYR_CT"/>
</dbReference>
<dbReference type="PANTHER" id="PTHR42880">
    <property type="entry name" value="HOMOCITRATE SYNTHASE"/>
    <property type="match status" value="1"/>
</dbReference>
<dbReference type="PANTHER" id="PTHR42880:SF1">
    <property type="entry name" value="ISOPROPYLMALATE_HOMOCITRATE_CITRAMALATE SYNTHASE FAMILY PROTEIN"/>
    <property type="match status" value="1"/>
</dbReference>
<dbReference type="Pfam" id="PF22617">
    <property type="entry name" value="HCS_D2"/>
    <property type="match status" value="1"/>
</dbReference>
<dbReference type="Pfam" id="PF00682">
    <property type="entry name" value="HMGL-like"/>
    <property type="match status" value="1"/>
</dbReference>
<dbReference type="SUPFAM" id="SSF51569">
    <property type="entry name" value="Aldolase"/>
    <property type="match status" value="1"/>
</dbReference>
<dbReference type="PROSITE" id="PS50991">
    <property type="entry name" value="PYR_CT"/>
    <property type="match status" value="1"/>
</dbReference>
<accession>P0DO96</accession>
<keyword id="KW-0170">Cobalt</keyword>
<keyword id="KW-0460">Magnesium</keyword>
<keyword id="KW-0464">Manganese</keyword>
<keyword id="KW-0808">Transferase</keyword>
<sequence>MGKIFIIDVTNRDGVQTARLGLSKLEKTLINIYLDEMGIFQSEFGFPTTKHERGYVEANLELAKMGVIKNLRLEGWIRAIVADVDLAFRRAPSLKHLNLSISTSEQMINGKFQGRKVFKDIIEDMTIAVNAAYAKGAETVGVNAEDASRTSIVNLIEFGKAAKEVGATRLRYCDTLGYDNPFTIYETARTLAEKVGMPIEIHCHGDLGMAIGNSLAGAKGVIDGGQDVYVNTTVNGIGERAGNADLVAFLLAILKSKGFGEKYQLGHEVDLSKAWKIARFASYAFDVEIPINQPGVGRNCFAHASGIHADGVIKDSQNYELYGYEELGRGEALMVETGREICAGQYSGISGFRHVMGNMSVELPEDKDEANKILELVRYANVEAHKPLVEDELIFIAKYPEISRRLLTLTPLMND</sequence>
<name>CIRSY_DEHMC</name>
<reference key="1">
    <citation type="journal article" date="2005" name="Nat. Biotechnol.">
        <title>Genome sequence of the chlorinated compound-respiring bacterium Dehalococcoides species strain CBDB1.</title>
        <authorList>
            <person name="Kube M."/>
            <person name="Beck A."/>
            <person name="Zinder S.H."/>
            <person name="Kuhl H."/>
            <person name="Reinhardt R."/>
            <person name="Adrian L."/>
        </authorList>
    </citation>
    <scope>NUCLEOTIDE SEQUENCE [LARGE SCALE GENOMIC DNA]</scope>
    <source>
        <strain>CBDB1</strain>
    </source>
</reference>
<reference key="2">
    <citation type="journal article" date="2011" name="J. Bacteriol.">
        <title>Identification and characterization of a re-citrate synthase in Dehalococcoides strain CBDB1.</title>
        <authorList>
            <person name="Marco-Urrea E."/>
            <person name="Paul S."/>
            <person name="Khodaverdi V."/>
            <person name="Seifert J."/>
            <person name="von Bergen M."/>
            <person name="Kretzschmar U."/>
            <person name="Adrian L."/>
        </authorList>
    </citation>
    <scope>FUNCTION</scope>
    <scope>CATALYTIC ACTIVITY</scope>
    <scope>BIOPHYSICOCHEMICAL PROPERTIES</scope>
    <scope>ACTIVITY REGULATION</scope>
    <scope>COFACTOR</scope>
    <scope>SUBSTRATE SPECIFICITY</scope>
    <source>
        <strain>CBDB1</strain>
    </source>
</reference>
<protein>
    <recommendedName>
        <fullName evidence="3">Citrate (Re)-synthase</fullName>
        <ecNumber evidence="2">2.3.3.3</ecNumber>
    </recommendedName>
    <alternativeName>
        <fullName evidence="3">Re face-specific citrate synthase</fullName>
    </alternativeName>
    <alternativeName>
        <fullName evidence="3">Re-citrate synthase</fullName>
    </alternativeName>
</protein>
<proteinExistence type="evidence at protein level"/>